<organism>
    <name type="scientific">Clostridium kluyveri (strain NBRC 12016)</name>
    <dbReference type="NCBI Taxonomy" id="583346"/>
    <lineage>
        <taxon>Bacteria</taxon>
        <taxon>Bacillati</taxon>
        <taxon>Bacillota</taxon>
        <taxon>Clostridia</taxon>
        <taxon>Eubacteriales</taxon>
        <taxon>Clostridiaceae</taxon>
        <taxon>Clostridium</taxon>
    </lineage>
</organism>
<proteinExistence type="inferred from homology"/>
<protein>
    <recommendedName>
        <fullName evidence="1">Flagellar assembly factor FliW</fullName>
    </recommendedName>
</protein>
<dbReference type="EMBL" id="AP009049">
    <property type="protein sequence ID" value="BAH06908.1"/>
    <property type="molecule type" value="Genomic_DNA"/>
</dbReference>
<dbReference type="RefSeq" id="WP_012102456.1">
    <property type="nucleotide sequence ID" value="NC_011837.1"/>
</dbReference>
<dbReference type="SMR" id="B9E333"/>
<dbReference type="KEGG" id="ckr:CKR_1857"/>
<dbReference type="HOGENOM" id="CLU_112356_0_2_9"/>
<dbReference type="Proteomes" id="UP000007969">
    <property type="component" value="Chromosome"/>
</dbReference>
<dbReference type="GO" id="GO:0005737">
    <property type="term" value="C:cytoplasm"/>
    <property type="evidence" value="ECO:0007669"/>
    <property type="project" value="UniProtKB-SubCell"/>
</dbReference>
<dbReference type="GO" id="GO:0044780">
    <property type="term" value="P:bacterial-type flagellum assembly"/>
    <property type="evidence" value="ECO:0007669"/>
    <property type="project" value="UniProtKB-UniRule"/>
</dbReference>
<dbReference type="GO" id="GO:0006417">
    <property type="term" value="P:regulation of translation"/>
    <property type="evidence" value="ECO:0007669"/>
    <property type="project" value="UniProtKB-KW"/>
</dbReference>
<dbReference type="Gene3D" id="2.30.290.10">
    <property type="entry name" value="BH3618-like"/>
    <property type="match status" value="1"/>
</dbReference>
<dbReference type="HAMAP" id="MF_01185">
    <property type="entry name" value="FliW"/>
    <property type="match status" value="1"/>
</dbReference>
<dbReference type="InterPro" id="IPR003775">
    <property type="entry name" value="Flagellar_assembly_factor_FliW"/>
</dbReference>
<dbReference type="InterPro" id="IPR024046">
    <property type="entry name" value="Flagellar_assmbl_FliW_dom_sf"/>
</dbReference>
<dbReference type="NCBIfam" id="NF009793">
    <property type="entry name" value="PRK13285.1-1"/>
    <property type="match status" value="1"/>
</dbReference>
<dbReference type="PANTHER" id="PTHR39190">
    <property type="entry name" value="FLAGELLAR ASSEMBLY FACTOR FLIW"/>
    <property type="match status" value="1"/>
</dbReference>
<dbReference type="PANTHER" id="PTHR39190:SF1">
    <property type="entry name" value="FLAGELLAR ASSEMBLY FACTOR FLIW"/>
    <property type="match status" value="1"/>
</dbReference>
<dbReference type="Pfam" id="PF02623">
    <property type="entry name" value="FliW"/>
    <property type="match status" value="1"/>
</dbReference>
<dbReference type="SUPFAM" id="SSF141457">
    <property type="entry name" value="BH3618-like"/>
    <property type="match status" value="1"/>
</dbReference>
<evidence type="ECO:0000255" key="1">
    <source>
        <dbReference type="HAMAP-Rule" id="MF_01185"/>
    </source>
</evidence>
<keyword id="KW-1005">Bacterial flagellum biogenesis</keyword>
<keyword id="KW-0143">Chaperone</keyword>
<keyword id="KW-0963">Cytoplasm</keyword>
<keyword id="KW-0810">Translation regulation</keyword>
<reference key="1">
    <citation type="submission" date="2005-09" db="EMBL/GenBank/DDBJ databases">
        <title>Complete genome sequence of Clostridium kluyveri and comparative genomics of Clostridia species.</title>
        <authorList>
            <person name="Inui M."/>
            <person name="Nonaka H."/>
            <person name="Shinoda Y."/>
            <person name="Ikenaga Y."/>
            <person name="Abe M."/>
            <person name="Naito K."/>
            <person name="Vertes A.A."/>
            <person name="Yukawa H."/>
        </authorList>
    </citation>
    <scope>NUCLEOTIDE SEQUENCE [LARGE SCALE GENOMIC DNA]</scope>
    <source>
        <strain>NBRC 12016</strain>
    </source>
</reference>
<accession>B9E333</accession>
<sequence>MKLNTKYHGLLEYDEKNIVVFRKGIPGFEHLKKFILVPAEENNLFYILHSIEDENIGIIVASPFDILKDYEFELNEDKTAELKIENMEDIFIVNTVTLNSVLENITINLKAPIVINIKENIGEQLILDKVEYPIKYPLFKGEVSC</sequence>
<comment type="function">
    <text evidence="1">Acts as an anti-CsrA protein, binds CsrA and prevents it from repressing translation of its target genes, one of which is flagellin. Binds to flagellin and participates in the assembly of the flagellum.</text>
</comment>
<comment type="subunit">
    <text evidence="1">Interacts with translational regulator CsrA and flagellin(s).</text>
</comment>
<comment type="subcellular location">
    <subcellularLocation>
        <location evidence="1">Cytoplasm</location>
    </subcellularLocation>
</comment>
<comment type="similarity">
    <text evidence="1">Belongs to the FliW family.</text>
</comment>
<gene>
    <name evidence="1" type="primary">fliW</name>
    <name type="ordered locus">CKR_1857</name>
</gene>
<name>FLIW_CLOK1</name>
<feature type="chain" id="PRO_1000164466" description="Flagellar assembly factor FliW">
    <location>
        <begin position="1"/>
        <end position="145"/>
    </location>
</feature>